<protein>
    <recommendedName>
        <fullName>Elastin-binding protein EbpS</fullName>
    </recommendedName>
</protein>
<evidence type="ECO:0000250" key="1"/>
<evidence type="ECO:0000255" key="2"/>
<evidence type="ECO:0000255" key="3">
    <source>
        <dbReference type="PROSITE-ProRule" id="PRU01118"/>
    </source>
</evidence>
<evidence type="ECO:0000256" key="4">
    <source>
        <dbReference type="SAM" id="MobiDB-lite"/>
    </source>
</evidence>
<reference key="1">
    <citation type="journal article" date="2005" name="J. Bacteriol.">
        <title>Insights on evolution of virulence and resistance from the complete genome analysis of an early methicillin-resistant Staphylococcus aureus strain and a biofilm-producing methicillin-resistant Staphylococcus epidermidis strain.</title>
        <authorList>
            <person name="Gill S.R."/>
            <person name="Fouts D.E."/>
            <person name="Archer G.L."/>
            <person name="Mongodin E.F."/>
            <person name="DeBoy R.T."/>
            <person name="Ravel J."/>
            <person name="Paulsen I.T."/>
            <person name="Kolonay J.F."/>
            <person name="Brinkac L.M."/>
            <person name="Beanan M.J."/>
            <person name="Dodson R.J."/>
            <person name="Daugherty S.C."/>
            <person name="Madupu R."/>
            <person name="Angiuoli S.V."/>
            <person name="Durkin A.S."/>
            <person name="Haft D.H."/>
            <person name="Vamathevan J.J."/>
            <person name="Khouri H."/>
            <person name="Utterback T.R."/>
            <person name="Lee C."/>
            <person name="Dimitrov G."/>
            <person name="Jiang L."/>
            <person name="Qin H."/>
            <person name="Weidman J."/>
            <person name="Tran K."/>
            <person name="Kang K.H."/>
            <person name="Hance I.R."/>
            <person name="Nelson K.E."/>
            <person name="Fraser C.M."/>
        </authorList>
    </citation>
    <scope>NUCLEOTIDE SEQUENCE [LARGE SCALE GENOMIC DNA]</scope>
    <source>
        <strain>COL</strain>
    </source>
</reference>
<sequence length="486" mass="53221">MSNNFKDDFEKNRQSIDTNSHQDHTEDVEKDQSELEHQDTIENTEQQFPPRNAQRRKRRRDLATNHNKQVHNESQTSEDNVQNEAGTIDDRQVESSHSTESQEPSHQDSTPQHEEEYYNKNAFAMDKSHPEPIEDNDKHDTIKNAENNTEHSTVSDKSEAEQSQQPKPYFTTGANQSETSKNEHDNDSVKQDQDEPKEHHNGKKAAAIGAGTAGVAGAAGAMAASKAKKHSNDAQNKSNSGKANNSTEDKASQDKSKDHHNGKKGAAIGAGTAGLAGGAASKSASAASKPHASNNASQNHDEHDNHDRDKERKKGGMAKVLLPLIAAVLIIGALAIFGGMALNNHNNGTKENKIANTNKNNADESKDKDTSKDASKDKSKSTDSDKSKEDQDKATKDESDNDQNNANQANNQAQNNQNQQQANQNQQQQQQRQGGGQRHTVNGQENLYRIAIQYYGSGSPENVEKIRRANGLSGNNIRNGQQIVIP</sequence>
<name>EBPS_STAAC</name>
<keyword id="KW-1003">Cell membrane</keyword>
<keyword id="KW-0472">Membrane</keyword>
<keyword id="KW-0812">Transmembrane</keyword>
<keyword id="KW-1133">Transmembrane helix</keyword>
<proteinExistence type="inferred from homology"/>
<dbReference type="EMBL" id="CP000046">
    <property type="protein sequence ID" value="AAW36716.1"/>
    <property type="molecule type" value="Genomic_DNA"/>
</dbReference>
<dbReference type="RefSeq" id="WP_000069282.1">
    <property type="nucleotide sequence ID" value="NZ_JBGOFO010000003.1"/>
</dbReference>
<dbReference type="SMR" id="Q5HFU2"/>
<dbReference type="KEGG" id="sac:SACOL1522"/>
<dbReference type="HOGENOM" id="CLU_043950_0_0_9"/>
<dbReference type="PRO" id="PR:Q5HFU2"/>
<dbReference type="Proteomes" id="UP000000530">
    <property type="component" value="Chromosome"/>
</dbReference>
<dbReference type="GO" id="GO:0005886">
    <property type="term" value="C:plasma membrane"/>
    <property type="evidence" value="ECO:0007669"/>
    <property type="project" value="UniProtKB-SubCell"/>
</dbReference>
<dbReference type="CDD" id="cd00118">
    <property type="entry name" value="LysM"/>
    <property type="match status" value="1"/>
</dbReference>
<dbReference type="Gene3D" id="3.10.350.10">
    <property type="entry name" value="LysM domain"/>
    <property type="match status" value="1"/>
</dbReference>
<dbReference type="InterPro" id="IPR018392">
    <property type="entry name" value="LysM_dom"/>
</dbReference>
<dbReference type="InterPro" id="IPR036779">
    <property type="entry name" value="LysM_dom_sf"/>
</dbReference>
<dbReference type="NCBIfam" id="NF033598">
    <property type="entry name" value="elast_bind_EbpS"/>
    <property type="match status" value="1"/>
</dbReference>
<dbReference type="Pfam" id="PF01476">
    <property type="entry name" value="LysM"/>
    <property type="match status" value="1"/>
</dbReference>
<dbReference type="SMART" id="SM00257">
    <property type="entry name" value="LysM"/>
    <property type="match status" value="1"/>
</dbReference>
<dbReference type="SUPFAM" id="SSF54106">
    <property type="entry name" value="LysM domain"/>
    <property type="match status" value="1"/>
</dbReference>
<dbReference type="PROSITE" id="PS51782">
    <property type="entry name" value="LYSM"/>
    <property type="match status" value="1"/>
</dbReference>
<accession>Q5HFU2</accession>
<feature type="initiator methionine" description="Removed" evidence="1">
    <location>
        <position position="1"/>
    </location>
</feature>
<feature type="chain" id="PRO_0000271733" description="Elastin-binding protein EbpS">
    <location>
        <begin position="2"/>
        <end position="486"/>
    </location>
</feature>
<feature type="topological domain" description="Extracellular" evidence="2">
    <location>
        <begin position="2"/>
        <end position="204"/>
    </location>
</feature>
<feature type="transmembrane region" description="Helical" evidence="2">
    <location>
        <begin position="205"/>
        <end position="225"/>
    </location>
</feature>
<feature type="topological domain" description="Cytoplasmic" evidence="2">
    <location>
        <begin position="226"/>
        <end position="319"/>
    </location>
</feature>
<feature type="transmembrane region" description="Helical" evidence="2">
    <location>
        <begin position="320"/>
        <end position="340"/>
    </location>
</feature>
<feature type="topological domain" description="Extracellular" evidence="2">
    <location>
        <begin position="341"/>
        <end position="486"/>
    </location>
</feature>
<feature type="domain" description="LysM" evidence="3">
    <location>
        <begin position="437"/>
        <end position="485"/>
    </location>
</feature>
<feature type="region of interest" description="Disordered" evidence="4">
    <location>
        <begin position="1"/>
        <end position="314"/>
    </location>
</feature>
<feature type="region of interest" description="Elastin-binding" evidence="1">
    <location>
        <begin position="14"/>
        <end position="34"/>
    </location>
</feature>
<feature type="region of interest" description="Disordered" evidence="4">
    <location>
        <begin position="351"/>
        <end position="440"/>
    </location>
</feature>
<feature type="compositionally biased region" description="Basic and acidic residues" evidence="4">
    <location>
        <begin position="1"/>
        <end position="40"/>
    </location>
</feature>
<feature type="compositionally biased region" description="Polar residues" evidence="4">
    <location>
        <begin position="64"/>
        <end position="85"/>
    </location>
</feature>
<feature type="compositionally biased region" description="Basic and acidic residues" evidence="4">
    <location>
        <begin position="103"/>
        <end position="118"/>
    </location>
</feature>
<feature type="compositionally biased region" description="Basic and acidic residues" evidence="4">
    <location>
        <begin position="126"/>
        <end position="143"/>
    </location>
</feature>
<feature type="compositionally biased region" description="Polar residues" evidence="4">
    <location>
        <begin position="161"/>
        <end position="179"/>
    </location>
</feature>
<feature type="compositionally biased region" description="Basic and acidic residues" evidence="4">
    <location>
        <begin position="180"/>
        <end position="199"/>
    </location>
</feature>
<feature type="compositionally biased region" description="Low complexity" evidence="4">
    <location>
        <begin position="204"/>
        <end position="225"/>
    </location>
</feature>
<feature type="compositionally biased region" description="Polar residues" evidence="4">
    <location>
        <begin position="233"/>
        <end position="246"/>
    </location>
</feature>
<feature type="compositionally biased region" description="Basic and acidic residues" evidence="4">
    <location>
        <begin position="247"/>
        <end position="259"/>
    </location>
</feature>
<feature type="compositionally biased region" description="Low complexity" evidence="4">
    <location>
        <begin position="278"/>
        <end position="297"/>
    </location>
</feature>
<feature type="compositionally biased region" description="Basic and acidic residues" evidence="4">
    <location>
        <begin position="299"/>
        <end position="314"/>
    </location>
</feature>
<feature type="compositionally biased region" description="Basic and acidic residues" evidence="4">
    <location>
        <begin position="361"/>
        <end position="398"/>
    </location>
</feature>
<feature type="compositionally biased region" description="Low complexity" evidence="4">
    <location>
        <begin position="403"/>
        <end position="431"/>
    </location>
</feature>
<gene>
    <name type="primary">ebpS</name>
    <name type="ordered locus">SACOL1522</name>
</gene>
<organism>
    <name type="scientific">Staphylococcus aureus (strain COL)</name>
    <dbReference type="NCBI Taxonomy" id="93062"/>
    <lineage>
        <taxon>Bacteria</taxon>
        <taxon>Bacillati</taxon>
        <taxon>Bacillota</taxon>
        <taxon>Bacilli</taxon>
        <taxon>Bacillales</taxon>
        <taxon>Staphylococcaceae</taxon>
        <taxon>Staphylococcus</taxon>
    </lineage>
</organism>
<comment type="function">
    <text evidence="1">Promotes binding of soluble elastin peptides and tropoelastin to S.aureus cells although it is not able to promote bacterial adherence to immobilized elastin and, therefore, is not a microbial surface component recognizing adhesive matrix molecule (MSCRAMM).</text>
</comment>
<comment type="subcellular location">
    <subcellularLocation>
        <location evidence="1">Cell membrane</location>
        <topology evidence="1">Multi-pass membrane protein</topology>
    </subcellularLocation>
</comment>
<comment type="domain">
    <text evidence="1">The elastin-binding domain is located between residues 13-33 at the surface-exposed N-terminus, whereas the C-terminus, containing the LysM peptidoglycan-binding domain, is not exposed on the surface of intact cells and presumably remains buried within the peptidoglycan. The presence of the TNSHQD sequence, corresponding to residues 18-23, is essential for EbpS activity but not sufficient, additional flanking amino acids in the amino- or carboxy-terminal are required for elastin recognition (By similarity).</text>
</comment>